<feature type="chain" id="PRO_0000124287" description="Small ribosomal subunit protein uS7">
    <location>
        <begin position="1"/>
        <end position="156"/>
    </location>
</feature>
<proteinExistence type="inferred from homology"/>
<sequence>MPRKGPVAKRDVLPDPIYNSKLVTRLINKMMVDGKRGKSQAILYSAFDIIAQETGKDPMEVFEQAMKNIMPLLEVKARRVGGANYQVPIEVRADRRSTLGLRWLVNYARLRGEKTMEVRVAREIMDAANNTGASVKKREDTHKMADANRAFAHYRW</sequence>
<keyword id="KW-0687">Ribonucleoprotein</keyword>
<keyword id="KW-0689">Ribosomal protein</keyword>
<keyword id="KW-0694">RNA-binding</keyword>
<keyword id="KW-0699">rRNA-binding</keyword>
<keyword id="KW-0820">tRNA-binding</keyword>
<protein>
    <recommendedName>
        <fullName evidence="1">Small ribosomal subunit protein uS7</fullName>
    </recommendedName>
    <alternativeName>
        <fullName evidence="2">30S ribosomal protein S7</fullName>
    </alternativeName>
</protein>
<comment type="function">
    <text evidence="1">One of the primary rRNA binding proteins, it binds directly to 16S rRNA where it nucleates assembly of the head domain of the 30S subunit. Is located at the subunit interface close to the decoding center, probably blocks exit of the E-site tRNA.</text>
</comment>
<comment type="subunit">
    <text evidence="1">Part of the 30S ribosomal subunit. Contacts proteins S9 and S11.</text>
</comment>
<comment type="similarity">
    <text evidence="1">Belongs to the universal ribosomal protein uS7 family.</text>
</comment>
<name>RS7_LISMF</name>
<reference key="1">
    <citation type="journal article" date="2004" name="Nucleic Acids Res.">
        <title>Whole genome comparisons of serotype 4b and 1/2a strains of the food-borne pathogen Listeria monocytogenes reveal new insights into the core genome components of this species.</title>
        <authorList>
            <person name="Nelson K.E."/>
            <person name="Fouts D.E."/>
            <person name="Mongodin E.F."/>
            <person name="Ravel J."/>
            <person name="DeBoy R.T."/>
            <person name="Kolonay J.F."/>
            <person name="Rasko D.A."/>
            <person name="Angiuoli S.V."/>
            <person name="Gill S.R."/>
            <person name="Paulsen I.T."/>
            <person name="Peterson J.D."/>
            <person name="White O."/>
            <person name="Nelson W.C."/>
            <person name="Nierman W.C."/>
            <person name="Beanan M.J."/>
            <person name="Brinkac L.M."/>
            <person name="Daugherty S.C."/>
            <person name="Dodson R.J."/>
            <person name="Durkin A.S."/>
            <person name="Madupu R."/>
            <person name="Haft D.H."/>
            <person name="Selengut J."/>
            <person name="Van Aken S.E."/>
            <person name="Khouri H.M."/>
            <person name="Fedorova N."/>
            <person name="Forberger H.A."/>
            <person name="Tran B."/>
            <person name="Kathariou S."/>
            <person name="Wonderling L.D."/>
            <person name="Uhlich G.A."/>
            <person name="Bayles D.O."/>
            <person name="Luchansky J.B."/>
            <person name="Fraser C.M."/>
        </authorList>
    </citation>
    <scope>NUCLEOTIDE SEQUENCE [LARGE SCALE GENOMIC DNA]</scope>
    <source>
        <strain>F2365</strain>
    </source>
</reference>
<accession>Q71WB7</accession>
<organism>
    <name type="scientific">Listeria monocytogenes serotype 4b (strain F2365)</name>
    <dbReference type="NCBI Taxonomy" id="265669"/>
    <lineage>
        <taxon>Bacteria</taxon>
        <taxon>Bacillati</taxon>
        <taxon>Bacillota</taxon>
        <taxon>Bacilli</taxon>
        <taxon>Bacillales</taxon>
        <taxon>Listeriaceae</taxon>
        <taxon>Listeria</taxon>
    </lineage>
</organism>
<gene>
    <name evidence="1" type="primary">rpsG</name>
    <name type="ordered locus">LMOf2365_2634</name>
</gene>
<evidence type="ECO:0000255" key="1">
    <source>
        <dbReference type="HAMAP-Rule" id="MF_00480"/>
    </source>
</evidence>
<evidence type="ECO:0000305" key="2"/>
<dbReference type="EMBL" id="AE017262">
    <property type="protein sequence ID" value="AAT05399.1"/>
    <property type="molecule type" value="Genomic_DNA"/>
</dbReference>
<dbReference type="RefSeq" id="WP_003722012.1">
    <property type="nucleotide sequence ID" value="NC_002973.6"/>
</dbReference>
<dbReference type="SMR" id="Q71WB7"/>
<dbReference type="GeneID" id="93236077"/>
<dbReference type="KEGG" id="lmf:LMOf2365_2634"/>
<dbReference type="HOGENOM" id="CLU_072226_1_1_9"/>
<dbReference type="GO" id="GO:0015935">
    <property type="term" value="C:small ribosomal subunit"/>
    <property type="evidence" value="ECO:0007669"/>
    <property type="project" value="InterPro"/>
</dbReference>
<dbReference type="GO" id="GO:0019843">
    <property type="term" value="F:rRNA binding"/>
    <property type="evidence" value="ECO:0007669"/>
    <property type="project" value="UniProtKB-UniRule"/>
</dbReference>
<dbReference type="GO" id="GO:0003735">
    <property type="term" value="F:structural constituent of ribosome"/>
    <property type="evidence" value="ECO:0007669"/>
    <property type="project" value="InterPro"/>
</dbReference>
<dbReference type="GO" id="GO:0000049">
    <property type="term" value="F:tRNA binding"/>
    <property type="evidence" value="ECO:0007669"/>
    <property type="project" value="UniProtKB-UniRule"/>
</dbReference>
<dbReference type="GO" id="GO:0006412">
    <property type="term" value="P:translation"/>
    <property type="evidence" value="ECO:0007669"/>
    <property type="project" value="UniProtKB-UniRule"/>
</dbReference>
<dbReference type="CDD" id="cd14869">
    <property type="entry name" value="uS7_Bacteria"/>
    <property type="match status" value="1"/>
</dbReference>
<dbReference type="FunFam" id="1.10.455.10:FF:000001">
    <property type="entry name" value="30S ribosomal protein S7"/>
    <property type="match status" value="1"/>
</dbReference>
<dbReference type="Gene3D" id="1.10.455.10">
    <property type="entry name" value="Ribosomal protein S7 domain"/>
    <property type="match status" value="1"/>
</dbReference>
<dbReference type="HAMAP" id="MF_00480_B">
    <property type="entry name" value="Ribosomal_uS7_B"/>
    <property type="match status" value="1"/>
</dbReference>
<dbReference type="InterPro" id="IPR000235">
    <property type="entry name" value="Ribosomal_uS7"/>
</dbReference>
<dbReference type="InterPro" id="IPR005717">
    <property type="entry name" value="Ribosomal_uS7_bac/org-type"/>
</dbReference>
<dbReference type="InterPro" id="IPR020606">
    <property type="entry name" value="Ribosomal_uS7_CS"/>
</dbReference>
<dbReference type="InterPro" id="IPR023798">
    <property type="entry name" value="Ribosomal_uS7_dom"/>
</dbReference>
<dbReference type="InterPro" id="IPR036823">
    <property type="entry name" value="Ribosomal_uS7_dom_sf"/>
</dbReference>
<dbReference type="NCBIfam" id="TIGR01029">
    <property type="entry name" value="rpsG_bact"/>
    <property type="match status" value="1"/>
</dbReference>
<dbReference type="PANTHER" id="PTHR11205">
    <property type="entry name" value="RIBOSOMAL PROTEIN S7"/>
    <property type="match status" value="1"/>
</dbReference>
<dbReference type="Pfam" id="PF00177">
    <property type="entry name" value="Ribosomal_S7"/>
    <property type="match status" value="1"/>
</dbReference>
<dbReference type="PIRSF" id="PIRSF002122">
    <property type="entry name" value="RPS7p_RPS7a_RPS5e_RPS7o"/>
    <property type="match status" value="1"/>
</dbReference>
<dbReference type="SUPFAM" id="SSF47973">
    <property type="entry name" value="Ribosomal protein S7"/>
    <property type="match status" value="1"/>
</dbReference>
<dbReference type="PROSITE" id="PS00052">
    <property type="entry name" value="RIBOSOMAL_S7"/>
    <property type="match status" value="1"/>
</dbReference>